<sequence length="555" mass="62646">MSSFSYEPYYSTSYKRRYVETPRVHISSVRSGYSTARSAYSSYSAPVSSSLSVRRSYSSSSGSLMPSLESLDLSQVAAISNDLKSIRTQEKAQLQDLNDRFASFIERVHELEQQNKVLEAELLVLRQKHSEPSRFRALYEQEIRDLRLAAEDATNEKQALQGEREGLEETLRNLQARYEEEVLSREDAEGRLMEARKGADEAALARAELEKRIDSLMDEIAFLKKVHEEEIAELQAQIQYAQISVEMDVSSKPDLSAALKDIRAQYEKLAAKNMQNAEEWFKSRFTVLTESAAKNTDAVRAAKDEVSESRRLLKAKTLEIEACRGMNEALEKQLQELEDKQNADISAMQDTINKLENELRTTKSEMARYLKEYQDLLNVKMALDIEIAAYRKLLEGEETRLSFTSVGSLTTGYTQSSQVFGRSAYGGLQTSSYLMSARSFPSYYTSHVQEEQIEVEETIEAAKAEEAKDEPPSEGEAEEEEKEKEEAEAEAEAEAEAEAEEEEGAQEEEAAKEDAEEAKEEEGGEGEEAEETKEAEEEEKKDEGAGEEQATKKKD</sequence>
<feature type="initiator methionine" description="Removed" evidence="6">
    <location>
        <position position="1"/>
    </location>
</feature>
<feature type="chain" id="PRO_0000063786" description="Neurofilament light polypeptide">
    <location>
        <begin position="2"/>
        <end position="555"/>
    </location>
</feature>
<feature type="domain" description="IF rod" evidence="4">
    <location>
        <begin position="90"/>
        <end position="401"/>
    </location>
</feature>
<feature type="region of interest" description="Head">
    <location>
        <begin position="2"/>
        <end position="93"/>
    </location>
</feature>
<feature type="region of interest" description="Coil 1A">
    <location>
        <begin position="94"/>
        <end position="125"/>
    </location>
</feature>
<feature type="region of interest" description="Linker 1">
    <location>
        <begin position="126"/>
        <end position="138"/>
    </location>
</feature>
<feature type="region of interest" description="Coil 1B">
    <location>
        <begin position="139"/>
        <end position="234"/>
    </location>
</feature>
<feature type="region of interest" description="Linker 12">
    <location>
        <begin position="235"/>
        <end position="253"/>
    </location>
</feature>
<feature type="region of interest" description="Coil 2A">
    <location>
        <begin position="254"/>
        <end position="272"/>
    </location>
</feature>
<feature type="region of interest" description="Linker 2">
    <location>
        <begin position="273"/>
        <end position="281"/>
    </location>
</feature>
<feature type="region of interest" description="Coil 2B">
    <location>
        <begin position="282"/>
        <end position="397"/>
    </location>
</feature>
<feature type="region of interest" description="Tail">
    <location>
        <begin position="398"/>
        <end position="555"/>
    </location>
</feature>
<feature type="region of interest" description="Tail, subdomain A">
    <location>
        <begin position="398"/>
        <end position="444"/>
    </location>
</feature>
<feature type="region of interest" description="Tail, subdomain B (acidic)">
    <location>
        <begin position="445"/>
        <end position="555"/>
    </location>
</feature>
<feature type="region of interest" description="Disordered" evidence="5">
    <location>
        <begin position="463"/>
        <end position="555"/>
    </location>
</feature>
<feature type="compositionally biased region" description="Acidic residues" evidence="5">
    <location>
        <begin position="472"/>
        <end position="540"/>
    </location>
</feature>
<feature type="compositionally biased region" description="Basic and acidic residues" evidence="5">
    <location>
        <begin position="541"/>
        <end position="555"/>
    </location>
</feature>
<feature type="modified residue" description="N-acetylserine" evidence="6">
    <location>
        <position position="2"/>
    </location>
</feature>
<feature type="modified residue" description="Asymmetric dimethylarginine; alternate" evidence="2">
    <location>
        <position position="23"/>
    </location>
</feature>
<feature type="modified residue" description="Omega-N-methylarginine; alternate" evidence="2">
    <location>
        <position position="23"/>
    </location>
</feature>
<feature type="modified residue" description="Omega-N-methylarginine" evidence="2">
    <location>
        <position position="30"/>
    </location>
</feature>
<feature type="modified residue" description="Phosphotyrosine" evidence="2">
    <location>
        <position position="43"/>
    </location>
</feature>
<feature type="modified residue" description="Phosphoserine" evidence="6">
    <location>
        <position position="56"/>
    </location>
</feature>
<feature type="modified residue" description="Phosphoserine" evidence="6">
    <location>
        <position position="67"/>
    </location>
</feature>
<feature type="modified residue" description="Phosphoserine" evidence="3">
    <location>
        <position position="103"/>
    </location>
</feature>
<feature type="modified residue" description="Phosphoserine" evidence="6">
    <location>
        <position position="473"/>
    </location>
</feature>
<feature type="modified residue" description="Phosphothreonine" evidence="3">
    <location>
        <position position="532"/>
    </location>
</feature>
<feature type="sequence conflict" description="In Ref. 3; AA sequence." evidence="7" ref="3">
    <location>
        <begin position="495"/>
        <end position="501"/>
    </location>
</feature>
<feature type="sequence conflict" description="In Ref. 3; AA sequence." evidence="7" ref="3">
    <original>A</original>
    <variation>AEA</variation>
    <location>
        <position position="510"/>
    </location>
</feature>
<comment type="function">
    <text evidence="2">Neurofilaments usually contain three intermediate filament proteins: NEFL, NEFM, and NEFH which are involved in the maintenance of neuronal caliber. May additionally cooperate with the neuronal intermediate filament proteins PRPH and INA to form neuronal filamentous networks (By similarity).</text>
</comment>
<comment type="subunit">
    <text evidence="1 3">Forms homodimers (in vitro) (By similarity). Forms heterodimers with NEFH or NEFM; which can further hetero-oligomerize (in vitro) (By similarity). Forms heterodimers with INA (in vitro) (By similarity). Interacts with ARHGEF28. Interacts with TRIM2.</text>
</comment>
<comment type="subcellular location">
    <subcellularLocation>
        <location evidence="2">Cell projection</location>
        <location evidence="2">Axon</location>
    </subcellularLocation>
    <subcellularLocation>
        <location evidence="2">Cytoplasm</location>
        <location evidence="2">Cytoskeleton</location>
    </subcellularLocation>
</comment>
<comment type="domain">
    <text>The extra mass and high charge density that distinguish the neurofilament proteins from all other intermediate filament proteins are due to the tailpiece extensions. This region may form a charged scaffolding structure suitable for interaction with other neuronal components or ions.</text>
</comment>
<comment type="PTM">
    <text evidence="1">O-glycosylated.</text>
</comment>
<comment type="PTM">
    <text evidence="1">Phosphorylated in the head and rod regions by the PKC kinase PKN1, leading to the inhibition of polymerization.</text>
</comment>
<comment type="PTM">
    <text evidence="1">Ubiquitinated in the presence of TRIM2 and UBE2D1.</text>
</comment>
<comment type="mass spectrometry" mass="62600.0" method="MALDI" evidence="6"/>
<comment type="miscellaneous">
    <text>NF-L is the most abundant of the three neurofilament proteins and, like the other nonepithelial intermediate filament proteins, it can form homomeric 10-nm filaments.</text>
</comment>
<comment type="similarity">
    <text evidence="4">Belongs to the intermediate filament family.</text>
</comment>
<name>NFL_BOVIN</name>
<organism>
    <name type="scientific">Bos taurus</name>
    <name type="common">Bovine</name>
    <dbReference type="NCBI Taxonomy" id="9913"/>
    <lineage>
        <taxon>Eukaryota</taxon>
        <taxon>Metazoa</taxon>
        <taxon>Chordata</taxon>
        <taxon>Craniata</taxon>
        <taxon>Vertebrata</taxon>
        <taxon>Euteleostomi</taxon>
        <taxon>Mammalia</taxon>
        <taxon>Eutheria</taxon>
        <taxon>Laurasiatheria</taxon>
        <taxon>Artiodactyla</taxon>
        <taxon>Ruminantia</taxon>
        <taxon>Pecora</taxon>
        <taxon>Bovidae</taxon>
        <taxon>Bovinae</taxon>
        <taxon>Bos</taxon>
    </lineage>
</organism>
<evidence type="ECO:0000250" key="1"/>
<evidence type="ECO:0000250" key="2">
    <source>
        <dbReference type="UniProtKB" id="P08551"/>
    </source>
</evidence>
<evidence type="ECO:0000250" key="3">
    <source>
        <dbReference type="UniProtKB" id="P19527"/>
    </source>
</evidence>
<evidence type="ECO:0000255" key="4">
    <source>
        <dbReference type="PROSITE-ProRule" id="PRU01188"/>
    </source>
</evidence>
<evidence type="ECO:0000256" key="5">
    <source>
        <dbReference type="SAM" id="MobiDB-lite"/>
    </source>
</evidence>
<evidence type="ECO:0000269" key="6">
    <source>
    </source>
</evidence>
<evidence type="ECO:0000305" key="7"/>
<reference key="1">
    <citation type="submission" date="1997-02" db="EMBL/GenBank/DDBJ databases">
        <authorList>
            <person name="Hill W.D."/>
            <person name="Zhang L."/>
            <person name="Balin B.J."/>
            <person name="Sprinkle T.J."/>
        </authorList>
    </citation>
    <scope>NUCLEOTIDE SEQUENCE [MRNA]</scope>
    <source>
        <strain>Holstein</strain>
        <tissue>Brain</tissue>
    </source>
</reference>
<reference key="2">
    <citation type="submission" date="2006-06" db="EMBL/GenBank/DDBJ databases">
        <authorList>
            <consortium name="NIH - Mammalian Gene Collection (MGC) project"/>
        </authorList>
    </citation>
    <scope>NUCLEOTIDE SEQUENCE [LARGE SCALE MRNA]</scope>
    <source>
        <strain>Hereford</strain>
        <tissue>Basal ganglia</tissue>
    </source>
</reference>
<reference key="3">
    <citation type="journal article" date="1985" name="FEBS Lett.">
        <title>Brain micro glutamic acid-rich protein is the C-terminal endpiece of the neurofilament 68-kDa protein as determined by the primary sequence.</title>
        <authorList>
            <person name="Isobe T."/>
            <person name="Okuyama T."/>
        </authorList>
    </citation>
    <scope>PROTEIN SEQUENCE OF 469-555</scope>
</reference>
<reference key="4">
    <citation type="journal article" date="2004" name="Biochemistry">
        <title>Identification of endogenous phosphorylation sites of bovine medium and low molecular weight neurofilament proteins by tandem mass spectrometry.</title>
        <authorList>
            <person name="Trimpin S."/>
            <person name="Mixon A.E."/>
            <person name="Stapels M.D."/>
            <person name="Kim M.Y."/>
            <person name="Spencer P.S."/>
            <person name="Deinzer M.L."/>
        </authorList>
    </citation>
    <scope>ACETYLATION AT SER-2</scope>
    <scope>PHOSPHORYLATION AT SER-56; SER-67 AND SER-473</scope>
    <scope>MASS SPECTROMETRY</scope>
</reference>
<gene>
    <name type="primary">NEFL</name>
</gene>
<dbReference type="EMBL" id="U83919">
    <property type="protein sequence ID" value="AAB41543.1"/>
    <property type="molecule type" value="mRNA"/>
</dbReference>
<dbReference type="EMBL" id="BC118240">
    <property type="protein sequence ID" value="AAI18241.1"/>
    <property type="molecule type" value="mRNA"/>
</dbReference>
<dbReference type="PIR" id="JW0094">
    <property type="entry name" value="JW0094"/>
</dbReference>
<dbReference type="RefSeq" id="NP_776546.1">
    <property type="nucleotide sequence ID" value="NM_174121.1"/>
</dbReference>
<dbReference type="SMR" id="P02548"/>
<dbReference type="FunCoup" id="P02548">
    <property type="interactions" value="292"/>
</dbReference>
<dbReference type="IntAct" id="P02548">
    <property type="interactions" value="1"/>
</dbReference>
<dbReference type="STRING" id="9913.ENSBTAP00000029264"/>
<dbReference type="iPTMnet" id="P02548"/>
<dbReference type="PaxDb" id="9913-ENSBTAP00000029264"/>
<dbReference type="PeptideAtlas" id="P02548"/>
<dbReference type="Ensembl" id="ENSBTAT00000029264.6">
    <property type="protein sequence ID" value="ENSBTAP00000029264.4"/>
    <property type="gene ID" value="ENSBTAG00000021949.6"/>
</dbReference>
<dbReference type="GeneID" id="281348"/>
<dbReference type="KEGG" id="bta:281348"/>
<dbReference type="CTD" id="4747"/>
<dbReference type="VEuPathDB" id="HostDB:ENSBTAG00000021949"/>
<dbReference type="VGNC" id="VGNC:31986">
    <property type="gene designation" value="NEFL"/>
</dbReference>
<dbReference type="eggNOG" id="ENOG502QSXY">
    <property type="taxonomic scope" value="Eukaryota"/>
</dbReference>
<dbReference type="GeneTree" id="ENSGT00940000156208"/>
<dbReference type="HOGENOM" id="CLU_012560_7_3_1"/>
<dbReference type="InParanoid" id="P02548"/>
<dbReference type="OMA" id="YKRRYME"/>
<dbReference type="OrthoDB" id="2441647at2759"/>
<dbReference type="TreeFam" id="TF330122"/>
<dbReference type="Reactome" id="R-BTA-438066">
    <property type="pathway name" value="Unblocking of NMDA receptors, glutamate binding and activation"/>
</dbReference>
<dbReference type="Reactome" id="R-BTA-5673001">
    <property type="pathway name" value="RAF/MAP kinase cascade"/>
</dbReference>
<dbReference type="Proteomes" id="UP000009136">
    <property type="component" value="Chromosome 8"/>
</dbReference>
<dbReference type="Bgee" id="ENSBTAG00000021949">
    <property type="expression patterns" value="Expressed in prefrontal cortex and 51 other cell types or tissues"/>
</dbReference>
<dbReference type="GO" id="GO:0030424">
    <property type="term" value="C:axon"/>
    <property type="evidence" value="ECO:0000250"/>
    <property type="project" value="AgBase"/>
</dbReference>
<dbReference type="GO" id="GO:1904115">
    <property type="term" value="C:axon cytoplasm"/>
    <property type="evidence" value="ECO:0007669"/>
    <property type="project" value="GOC"/>
</dbReference>
<dbReference type="GO" id="GO:0098981">
    <property type="term" value="C:cholinergic synapse"/>
    <property type="evidence" value="ECO:0007669"/>
    <property type="project" value="Ensembl"/>
</dbReference>
<dbReference type="GO" id="GO:0005882">
    <property type="term" value="C:intermediate filament"/>
    <property type="evidence" value="ECO:0000250"/>
    <property type="project" value="AgBase"/>
</dbReference>
<dbReference type="GO" id="GO:0005883">
    <property type="term" value="C:neurofilament"/>
    <property type="evidence" value="ECO:0000250"/>
    <property type="project" value="AgBase"/>
</dbReference>
<dbReference type="GO" id="GO:0031594">
    <property type="term" value="C:neuromuscular junction"/>
    <property type="evidence" value="ECO:0007669"/>
    <property type="project" value="Ensembl"/>
</dbReference>
<dbReference type="GO" id="GO:0099160">
    <property type="term" value="C:postsynaptic intermediate filament cytoskeleton"/>
    <property type="evidence" value="ECO:0000318"/>
    <property type="project" value="GO_Central"/>
</dbReference>
<dbReference type="GO" id="GO:0099182">
    <property type="term" value="C:presynaptic intermediate filament cytoskeleton"/>
    <property type="evidence" value="ECO:0007669"/>
    <property type="project" value="Ensembl"/>
</dbReference>
<dbReference type="GO" id="GO:0098685">
    <property type="term" value="C:Schaffer collateral - CA1 synapse"/>
    <property type="evidence" value="ECO:0007669"/>
    <property type="project" value="Ensembl"/>
</dbReference>
<dbReference type="GO" id="GO:0042802">
    <property type="term" value="F:identical protein binding"/>
    <property type="evidence" value="ECO:0000250"/>
    <property type="project" value="UniProtKB"/>
</dbReference>
<dbReference type="GO" id="GO:0030674">
    <property type="term" value="F:protein-macromolecule adaptor activity"/>
    <property type="evidence" value="ECO:0007669"/>
    <property type="project" value="Ensembl"/>
</dbReference>
<dbReference type="GO" id="GO:0005200">
    <property type="term" value="F:structural constituent of cytoskeleton"/>
    <property type="evidence" value="ECO:0000250"/>
    <property type="project" value="UniProtKB"/>
</dbReference>
<dbReference type="GO" id="GO:0099184">
    <property type="term" value="F:structural constituent of postsynaptic intermediate filament cytoskeleton"/>
    <property type="evidence" value="ECO:0000318"/>
    <property type="project" value="GO_Central"/>
</dbReference>
<dbReference type="GO" id="GO:0015631">
    <property type="term" value="F:tubulin binding"/>
    <property type="evidence" value="ECO:0007669"/>
    <property type="project" value="Ensembl"/>
</dbReference>
<dbReference type="GO" id="GO:0008089">
    <property type="term" value="P:anterograde axonal transport"/>
    <property type="evidence" value="ECO:0000250"/>
    <property type="project" value="UniProtKB"/>
</dbReference>
<dbReference type="GO" id="GO:0019896">
    <property type="term" value="P:axonal transport of mitochondrion"/>
    <property type="evidence" value="ECO:0000250"/>
    <property type="project" value="UniProtKB"/>
</dbReference>
<dbReference type="GO" id="GO:0007409">
    <property type="term" value="P:axonogenesis"/>
    <property type="evidence" value="ECO:0007669"/>
    <property type="project" value="Ensembl"/>
</dbReference>
<dbReference type="GO" id="GO:0045110">
    <property type="term" value="P:intermediate filament bundle assembly"/>
    <property type="evidence" value="ECO:0000250"/>
    <property type="project" value="AgBase"/>
</dbReference>
<dbReference type="GO" id="GO:0045109">
    <property type="term" value="P:intermediate filament organization"/>
    <property type="evidence" value="ECO:0000250"/>
    <property type="project" value="AgBase"/>
</dbReference>
<dbReference type="GO" id="GO:0040011">
    <property type="term" value="P:locomotion"/>
    <property type="evidence" value="ECO:0000250"/>
    <property type="project" value="AgBase"/>
</dbReference>
<dbReference type="GO" id="GO:0000226">
    <property type="term" value="P:microtubule cytoskeleton organization"/>
    <property type="evidence" value="ECO:0000250"/>
    <property type="project" value="AgBase"/>
</dbReference>
<dbReference type="GO" id="GO:0097049">
    <property type="term" value="P:motor neuron apoptotic process"/>
    <property type="evidence" value="ECO:0007669"/>
    <property type="project" value="Ensembl"/>
</dbReference>
<dbReference type="GO" id="GO:2000672">
    <property type="term" value="P:negative regulation of motor neuron apoptotic process"/>
    <property type="evidence" value="ECO:0007669"/>
    <property type="project" value="Ensembl"/>
</dbReference>
<dbReference type="GO" id="GO:0043524">
    <property type="term" value="P:negative regulation of neuron apoptotic process"/>
    <property type="evidence" value="ECO:0000250"/>
    <property type="project" value="AgBase"/>
</dbReference>
<dbReference type="GO" id="GO:0033693">
    <property type="term" value="P:neurofilament bundle assembly"/>
    <property type="evidence" value="ECO:0000250"/>
    <property type="project" value="UniProtKB"/>
</dbReference>
<dbReference type="GO" id="GO:0060052">
    <property type="term" value="P:neurofilament cytoskeleton organization"/>
    <property type="evidence" value="ECO:0000250"/>
    <property type="project" value="AgBase"/>
</dbReference>
<dbReference type="GO" id="GO:0050885">
    <property type="term" value="P:neuromuscular process controlling balance"/>
    <property type="evidence" value="ECO:0000250"/>
    <property type="project" value="AgBase"/>
</dbReference>
<dbReference type="GO" id="GO:0048812">
    <property type="term" value="P:neuron projection morphogenesis"/>
    <property type="evidence" value="ECO:0000250"/>
    <property type="project" value="AgBase"/>
</dbReference>
<dbReference type="GO" id="GO:0014012">
    <property type="term" value="P:peripheral nervous system axon regeneration"/>
    <property type="evidence" value="ECO:0000250"/>
    <property type="project" value="AgBase"/>
</dbReference>
<dbReference type="GO" id="GO:0050772">
    <property type="term" value="P:positive regulation of axonogenesis"/>
    <property type="evidence" value="ECO:0000250"/>
    <property type="project" value="AgBase"/>
</dbReference>
<dbReference type="GO" id="GO:0099170">
    <property type="term" value="P:postsynaptic modulation of chemical synaptic transmission"/>
    <property type="evidence" value="ECO:0007669"/>
    <property type="project" value="Ensembl"/>
</dbReference>
<dbReference type="GO" id="GO:0031133">
    <property type="term" value="P:regulation of axon diameter"/>
    <property type="evidence" value="ECO:0000250"/>
    <property type="project" value="AgBase"/>
</dbReference>
<dbReference type="GO" id="GO:0090128">
    <property type="term" value="P:regulation of synapse maturation"/>
    <property type="evidence" value="ECO:0007669"/>
    <property type="project" value="Ensembl"/>
</dbReference>
<dbReference type="GO" id="GO:0008090">
    <property type="term" value="P:retrograde axonal transport"/>
    <property type="evidence" value="ECO:0000250"/>
    <property type="project" value="UniProtKB"/>
</dbReference>
<dbReference type="FunFam" id="1.20.5.1160:FF:000001">
    <property type="entry name" value="Keratin type II"/>
    <property type="match status" value="1"/>
</dbReference>
<dbReference type="FunFam" id="1.20.5.170:FF:000002">
    <property type="entry name" value="Type I keratin KA11"/>
    <property type="match status" value="1"/>
</dbReference>
<dbReference type="FunFam" id="1.20.5.500:FF:000001">
    <property type="entry name" value="Type II keratin 23"/>
    <property type="match status" value="1"/>
</dbReference>
<dbReference type="Gene3D" id="1.20.5.170">
    <property type="match status" value="1"/>
</dbReference>
<dbReference type="Gene3D" id="1.20.5.500">
    <property type="entry name" value="Single helix bin"/>
    <property type="match status" value="1"/>
</dbReference>
<dbReference type="Gene3D" id="1.20.5.1160">
    <property type="entry name" value="Vasodilator-stimulated phosphoprotein"/>
    <property type="match status" value="1"/>
</dbReference>
<dbReference type="InterPro" id="IPR018039">
    <property type="entry name" value="IF_conserved"/>
</dbReference>
<dbReference type="InterPro" id="IPR039008">
    <property type="entry name" value="IF_rod_dom"/>
</dbReference>
<dbReference type="InterPro" id="IPR006821">
    <property type="entry name" value="Intermed_filament_DNA-bd"/>
</dbReference>
<dbReference type="InterPro" id="IPR050405">
    <property type="entry name" value="Intermediate_filament"/>
</dbReference>
<dbReference type="PANTHER" id="PTHR45652">
    <property type="entry name" value="GLIAL FIBRILLARY ACIDIC PROTEIN"/>
    <property type="match status" value="1"/>
</dbReference>
<dbReference type="PANTHER" id="PTHR45652:SF8">
    <property type="entry name" value="NEUROFILAMENT LIGHT POLYPEPTIDE"/>
    <property type="match status" value="1"/>
</dbReference>
<dbReference type="Pfam" id="PF00038">
    <property type="entry name" value="Filament"/>
    <property type="match status" value="1"/>
</dbReference>
<dbReference type="Pfam" id="PF04732">
    <property type="entry name" value="Filament_head"/>
    <property type="match status" value="1"/>
</dbReference>
<dbReference type="SMART" id="SM01391">
    <property type="entry name" value="Filament"/>
    <property type="match status" value="1"/>
</dbReference>
<dbReference type="SUPFAM" id="SSF64593">
    <property type="entry name" value="Intermediate filament protein, coiled coil region"/>
    <property type="match status" value="2"/>
</dbReference>
<dbReference type="PROSITE" id="PS00226">
    <property type="entry name" value="IF_ROD_1"/>
    <property type="match status" value="1"/>
</dbReference>
<dbReference type="PROSITE" id="PS51842">
    <property type="entry name" value="IF_ROD_2"/>
    <property type="match status" value="1"/>
</dbReference>
<keyword id="KW-0007">Acetylation</keyword>
<keyword id="KW-0966">Cell projection</keyword>
<keyword id="KW-0175">Coiled coil</keyword>
<keyword id="KW-0963">Cytoplasm</keyword>
<keyword id="KW-0206">Cytoskeleton</keyword>
<keyword id="KW-0903">Direct protein sequencing</keyword>
<keyword id="KW-0325">Glycoprotein</keyword>
<keyword id="KW-0403">Intermediate filament</keyword>
<keyword id="KW-0488">Methylation</keyword>
<keyword id="KW-0597">Phosphoprotein</keyword>
<keyword id="KW-1185">Reference proteome</keyword>
<keyword id="KW-0832">Ubl conjugation</keyword>
<accession>P02548</accession>
<accession>P79127</accession>
<accession>Q17QQ0</accession>
<proteinExistence type="evidence at protein level"/>
<protein>
    <recommendedName>
        <fullName>Neurofilament light polypeptide</fullName>
        <shortName>NF-L</shortName>
    </recommendedName>
    <alternativeName>
        <fullName>68 kDa neurofilament protein</fullName>
    </alternativeName>
    <alternativeName>
        <fullName>Micro glutamic acid-rich protein</fullName>
    </alternativeName>
    <alternativeName>
        <fullName>Neurofilament triplet L protein</fullName>
    </alternativeName>
</protein>